<comment type="function">
    <text evidence="1 4">Guanine nucleotide exchange factor (GEF) for mitochondrial dynamin-related GTPase OPA1. Activates OPA1, by exchanging bound GDP for free GTP, and drives OPA1 and MFN1-dependent mitochondrial fusion (PubMed:28746876). Plays an essential role in mitochondrial ribosome biogenesis. As a component of a functional protein-RNA module, consisting of RCC1L, NGRN, RPUSD3, RPUSD4, TRUB2, FASTKD2 and 16S mitochondrial ribosomal RNA (16S mt-rRNA), controls 16S mt-rRNA abundance and is required for intra-mitochondrial translation of core subunits of the oxidative phosphorylation system (By similarity).</text>
</comment>
<comment type="subunit">
    <text evidence="1 4">Forms a regulatory protein-RNA complex, consisting of RCC1L, NGRN, RPUSD3, RPUSD4, TRUB2, FASTKD2 and 16S mt-rRNA. Interacts with 16S mt-rRNA; this interaction is direct (By similarity). Interacts with OPA1; this interaction is direct (PubMed:28746876).</text>
</comment>
<comment type="subcellular location">
    <subcellularLocation>
        <location evidence="4">Mitochondrion inner membrane</location>
    </subcellularLocation>
</comment>
<comment type="tissue specificity">
    <text evidence="4">At E8.5, broadly expressed in yolk sac placenta, decidua, and embryo, with highest levels found in the trophoblast giant cells (TGCs) and ectoplacental cone (at protein level).</text>
</comment>
<comment type="domain">
    <text evidence="1">The RCC1-like repeats assemble into a circular seven-bladed beta propeller structure. Each blade is composed of four antiparallel beta-strands with loops between each strand.</text>
</comment>
<sequence length="461" mass="49995">MLAAARALRGPRPRWPTPAREHWTPAGRSRSRREAAEAEADVPVFQYVGERAARADRVFVWGFSFSGALGVPSFVVPSSGPGPRAGLRPRRRIQPVPYRLELDHKISSAACGYGFTLLSSKTKDVTKVWGMGLNKDSQLGFHRSRKDKTRGYEYVLEPSPVPLPLDRPQETKVLQVSCGRAHSLVLTDREGVFSMGNNSHGQCGRKVVEDEVYSESHKVHRMQDFDGQVVQVVCGQDHSLFLTDKGEVYSCGWGADGQTGLGHYNITSTPSKLGGDLAGVTVVQVATYGDCCLALSADGGVFGWGNSEYLQLASVTDSTQVNVPRCLPFSGVGKVKQVACGGTGCAVLNAEGHVFVWGYGILGKGPKLLETAIPEMIPPTLFGLTEFNPEVQVSQIRCGLSHFAALTNKGELFVWGKNIRGCLGIGRLEDQYFPWRVTMPGEPVDVACGVDHMVTLAKSFI</sequence>
<dbReference type="EMBL" id="AK017733">
    <property type="protein sequence ID" value="BAB30902.1"/>
    <property type="molecule type" value="mRNA"/>
</dbReference>
<dbReference type="EMBL" id="BC024714">
    <property type="protein sequence ID" value="AAH24714.1"/>
    <property type="molecule type" value="mRNA"/>
</dbReference>
<dbReference type="EMBL" id="BC055335">
    <property type="protein sequence ID" value="AAH55335.1"/>
    <property type="molecule type" value="mRNA"/>
</dbReference>
<dbReference type="CCDS" id="CCDS19718.1"/>
<dbReference type="RefSeq" id="NP_291050.1">
    <property type="nucleotide sequence ID" value="NM_033572.2"/>
</dbReference>
<dbReference type="SMR" id="Q9CYF5"/>
<dbReference type="BioGRID" id="220496">
    <property type="interactions" value="1"/>
</dbReference>
<dbReference type="FunCoup" id="Q9CYF5">
    <property type="interactions" value="1451"/>
</dbReference>
<dbReference type="STRING" id="10090.ENSMUSP00000075581"/>
<dbReference type="GlyGen" id="Q9CYF5">
    <property type="glycosylation" value="1 site"/>
</dbReference>
<dbReference type="iPTMnet" id="Q9CYF5"/>
<dbReference type="PhosphoSitePlus" id="Q9CYF5"/>
<dbReference type="PaxDb" id="10090-ENSMUSP00000075581"/>
<dbReference type="ProteomicsDB" id="255170"/>
<dbReference type="Pumba" id="Q9CYF5"/>
<dbReference type="Antibodypedia" id="73171">
    <property type="antibodies" value="106 antibodies from 19 providers"/>
</dbReference>
<dbReference type="DNASU" id="94254"/>
<dbReference type="Ensembl" id="ENSMUST00000076228.3">
    <property type="protein sequence ID" value="ENSMUSP00000075581.3"/>
    <property type="gene ID" value="ENSMUSG00000061979.9"/>
</dbReference>
<dbReference type="GeneID" id="94254"/>
<dbReference type="KEGG" id="mmu:94254"/>
<dbReference type="UCSC" id="uc008zvc.2">
    <property type="organism name" value="mouse"/>
</dbReference>
<dbReference type="AGR" id="MGI:2137600"/>
<dbReference type="CTD" id="81554"/>
<dbReference type="MGI" id="MGI:2137600">
    <property type="gene designation" value="Rcc1l"/>
</dbReference>
<dbReference type="VEuPathDB" id="HostDB:ENSMUSG00000061979"/>
<dbReference type="eggNOG" id="KOG1426">
    <property type="taxonomic scope" value="Eukaryota"/>
</dbReference>
<dbReference type="GeneTree" id="ENSGT00940000157317"/>
<dbReference type="HOGENOM" id="CLU_037900_0_0_1"/>
<dbReference type="InParanoid" id="Q9CYF5"/>
<dbReference type="OMA" id="GSFCMAL"/>
<dbReference type="OrthoDB" id="70707at2759"/>
<dbReference type="PhylomeDB" id="Q9CYF5"/>
<dbReference type="TreeFam" id="TF317425"/>
<dbReference type="BioGRID-ORCS" id="94254">
    <property type="hits" value="24 hits in 75 CRISPR screens"/>
</dbReference>
<dbReference type="PRO" id="PR:Q9CYF5"/>
<dbReference type="Proteomes" id="UP000000589">
    <property type="component" value="Chromosome 5"/>
</dbReference>
<dbReference type="RNAct" id="Q9CYF5">
    <property type="molecule type" value="protein"/>
</dbReference>
<dbReference type="Bgee" id="ENSMUSG00000061979">
    <property type="expression patterns" value="Expressed in ectoplacental cone and 244 other cell types or tissues"/>
</dbReference>
<dbReference type="ExpressionAtlas" id="Q9CYF5">
    <property type="expression patterns" value="baseline and differential"/>
</dbReference>
<dbReference type="GO" id="GO:0005743">
    <property type="term" value="C:mitochondrial inner membrane"/>
    <property type="evidence" value="ECO:0000314"/>
    <property type="project" value="UniProtKB"/>
</dbReference>
<dbReference type="GO" id="GO:0005759">
    <property type="term" value="C:mitochondrial matrix"/>
    <property type="evidence" value="ECO:0007669"/>
    <property type="project" value="Ensembl"/>
</dbReference>
<dbReference type="GO" id="GO:0005739">
    <property type="term" value="C:mitochondrion"/>
    <property type="evidence" value="ECO:0007005"/>
    <property type="project" value="MGI"/>
</dbReference>
<dbReference type="GO" id="GO:0005085">
    <property type="term" value="F:guanyl-nucleotide exchange factor activity"/>
    <property type="evidence" value="ECO:0000250"/>
    <property type="project" value="UniProtKB"/>
</dbReference>
<dbReference type="GO" id="GO:0019843">
    <property type="term" value="F:rRNA binding"/>
    <property type="evidence" value="ECO:0000250"/>
    <property type="project" value="UniProtKB"/>
</dbReference>
<dbReference type="GO" id="GO:0008053">
    <property type="term" value="P:mitochondrial fusion"/>
    <property type="evidence" value="ECO:0000315"/>
    <property type="project" value="UniProtKB"/>
</dbReference>
<dbReference type="GO" id="GO:1902775">
    <property type="term" value="P:mitochondrial large ribosomal subunit assembly"/>
    <property type="evidence" value="ECO:0000250"/>
    <property type="project" value="UniProtKB"/>
</dbReference>
<dbReference type="FunFam" id="2.130.10.30:FF:000024">
    <property type="entry name" value="RCC1-like G exchanging factor-like protein"/>
    <property type="match status" value="1"/>
</dbReference>
<dbReference type="Gene3D" id="2.130.10.30">
    <property type="entry name" value="Regulator of chromosome condensation 1/beta-lactamase-inhibitor protein II"/>
    <property type="match status" value="2"/>
</dbReference>
<dbReference type="InterPro" id="IPR053035">
    <property type="entry name" value="Mitochondrial_GEF_domain"/>
</dbReference>
<dbReference type="InterPro" id="IPR009091">
    <property type="entry name" value="RCC1/BLIP-II"/>
</dbReference>
<dbReference type="InterPro" id="IPR000408">
    <property type="entry name" value="Reg_chr_condens"/>
</dbReference>
<dbReference type="PANTHER" id="PTHR46337">
    <property type="entry name" value="RCC1-LIKE G EXCHANGING FACTOR-LIKE PROTEIN"/>
    <property type="match status" value="1"/>
</dbReference>
<dbReference type="PANTHER" id="PTHR46337:SF1">
    <property type="entry name" value="RCC1-LIKE G EXCHANGING FACTOR-LIKE PROTEIN"/>
    <property type="match status" value="1"/>
</dbReference>
<dbReference type="Pfam" id="PF00415">
    <property type="entry name" value="RCC1"/>
    <property type="match status" value="1"/>
</dbReference>
<dbReference type="Pfam" id="PF25390">
    <property type="entry name" value="WD40_RLD"/>
    <property type="match status" value="1"/>
</dbReference>
<dbReference type="PRINTS" id="PR00633">
    <property type="entry name" value="RCCNDNSATION"/>
</dbReference>
<dbReference type="SUPFAM" id="SSF50985">
    <property type="entry name" value="RCC1/BLIP-II"/>
    <property type="match status" value="1"/>
</dbReference>
<dbReference type="PROSITE" id="PS50012">
    <property type="entry name" value="RCC1_3"/>
    <property type="match status" value="6"/>
</dbReference>
<proteinExistence type="evidence at protein level"/>
<protein>
    <recommendedName>
        <fullName>RCC1-like G exchanging factor-like protein</fullName>
        <shortName>RCC1-like protein</shortName>
    </recommendedName>
    <alternativeName>
        <fullName>Williams-Beuren syndrome chromosomal region 16 protein homolog</fullName>
    </alternativeName>
</protein>
<name>RCC1L_MOUSE</name>
<organism>
    <name type="scientific">Mus musculus</name>
    <name type="common">Mouse</name>
    <dbReference type="NCBI Taxonomy" id="10090"/>
    <lineage>
        <taxon>Eukaryota</taxon>
        <taxon>Metazoa</taxon>
        <taxon>Chordata</taxon>
        <taxon>Craniata</taxon>
        <taxon>Vertebrata</taxon>
        <taxon>Euteleostomi</taxon>
        <taxon>Mammalia</taxon>
        <taxon>Eutheria</taxon>
        <taxon>Euarchontoglires</taxon>
        <taxon>Glires</taxon>
        <taxon>Rodentia</taxon>
        <taxon>Myomorpha</taxon>
        <taxon>Muroidea</taxon>
        <taxon>Muridae</taxon>
        <taxon>Murinae</taxon>
        <taxon>Mus</taxon>
        <taxon>Mus</taxon>
    </lineage>
</organism>
<feature type="transit peptide" description="Mitochondrion" evidence="1">
    <location>
        <begin position="1"/>
        <end position="34"/>
    </location>
</feature>
<feature type="chain" id="PRO_0000206657" description="RCC1-like G exchanging factor-like protein">
    <location>
        <begin position="35"/>
        <end position="461"/>
    </location>
</feature>
<feature type="repeat" description="RCC1 1" evidence="2">
    <location>
        <begin position="55"/>
        <end position="121"/>
    </location>
</feature>
<feature type="repeat" description="RCC1 2" evidence="2">
    <location>
        <begin position="125"/>
        <end position="188"/>
    </location>
</feature>
<feature type="repeat" description="RCC1 3" evidence="2">
    <location>
        <begin position="190"/>
        <end position="244"/>
    </location>
</feature>
<feature type="repeat" description="RCC1 4" evidence="2">
    <location>
        <begin position="245"/>
        <end position="297"/>
    </location>
</feature>
<feature type="repeat" description="RCC1 5" evidence="2">
    <location>
        <begin position="298"/>
        <end position="350"/>
    </location>
</feature>
<feature type="repeat" description="RCC1 6" evidence="2">
    <location>
        <begin position="352"/>
        <end position="408"/>
    </location>
</feature>
<feature type="repeat" description="RCC1 7" evidence="2">
    <location>
        <begin position="409"/>
        <end position="458"/>
    </location>
</feature>
<feature type="region of interest" description="Disordered" evidence="3">
    <location>
        <begin position="1"/>
        <end position="35"/>
    </location>
</feature>
<feature type="compositionally biased region" description="Low complexity" evidence="3">
    <location>
        <begin position="1"/>
        <end position="10"/>
    </location>
</feature>
<evidence type="ECO:0000250" key="1">
    <source>
        <dbReference type="UniProtKB" id="Q96I51"/>
    </source>
</evidence>
<evidence type="ECO:0000255" key="2"/>
<evidence type="ECO:0000256" key="3">
    <source>
        <dbReference type="SAM" id="MobiDB-lite"/>
    </source>
</evidence>
<evidence type="ECO:0000269" key="4">
    <source>
    </source>
</evidence>
<evidence type="ECO:0000303" key="5">
    <source>
    </source>
</evidence>
<evidence type="ECO:0000312" key="6">
    <source>
        <dbReference type="MGI" id="MGI:2137600"/>
    </source>
</evidence>
<accession>Q9CYF5</accession>
<gene>
    <name evidence="6" type="primary">Rcc1l</name>
    <name evidence="5" type="synonym">Wbscr16</name>
</gene>
<keyword id="KW-0472">Membrane</keyword>
<keyword id="KW-0496">Mitochondrion</keyword>
<keyword id="KW-0999">Mitochondrion inner membrane</keyword>
<keyword id="KW-1185">Reference proteome</keyword>
<keyword id="KW-0677">Repeat</keyword>
<keyword id="KW-0809">Transit peptide</keyword>
<reference key="1">
    <citation type="journal article" date="2005" name="Science">
        <title>The transcriptional landscape of the mammalian genome.</title>
        <authorList>
            <person name="Carninci P."/>
            <person name="Kasukawa T."/>
            <person name="Katayama S."/>
            <person name="Gough J."/>
            <person name="Frith M.C."/>
            <person name="Maeda N."/>
            <person name="Oyama R."/>
            <person name="Ravasi T."/>
            <person name="Lenhard B."/>
            <person name="Wells C."/>
            <person name="Kodzius R."/>
            <person name="Shimokawa K."/>
            <person name="Bajic V.B."/>
            <person name="Brenner S.E."/>
            <person name="Batalov S."/>
            <person name="Forrest A.R."/>
            <person name="Zavolan M."/>
            <person name="Davis M.J."/>
            <person name="Wilming L.G."/>
            <person name="Aidinis V."/>
            <person name="Allen J.E."/>
            <person name="Ambesi-Impiombato A."/>
            <person name="Apweiler R."/>
            <person name="Aturaliya R.N."/>
            <person name="Bailey T.L."/>
            <person name="Bansal M."/>
            <person name="Baxter L."/>
            <person name="Beisel K.W."/>
            <person name="Bersano T."/>
            <person name="Bono H."/>
            <person name="Chalk A.M."/>
            <person name="Chiu K.P."/>
            <person name="Choudhary V."/>
            <person name="Christoffels A."/>
            <person name="Clutterbuck D.R."/>
            <person name="Crowe M.L."/>
            <person name="Dalla E."/>
            <person name="Dalrymple B.P."/>
            <person name="de Bono B."/>
            <person name="Della Gatta G."/>
            <person name="di Bernardo D."/>
            <person name="Down T."/>
            <person name="Engstrom P."/>
            <person name="Fagiolini M."/>
            <person name="Faulkner G."/>
            <person name="Fletcher C.F."/>
            <person name="Fukushima T."/>
            <person name="Furuno M."/>
            <person name="Futaki S."/>
            <person name="Gariboldi M."/>
            <person name="Georgii-Hemming P."/>
            <person name="Gingeras T.R."/>
            <person name="Gojobori T."/>
            <person name="Green R.E."/>
            <person name="Gustincich S."/>
            <person name="Harbers M."/>
            <person name="Hayashi Y."/>
            <person name="Hensch T.K."/>
            <person name="Hirokawa N."/>
            <person name="Hill D."/>
            <person name="Huminiecki L."/>
            <person name="Iacono M."/>
            <person name="Ikeo K."/>
            <person name="Iwama A."/>
            <person name="Ishikawa T."/>
            <person name="Jakt M."/>
            <person name="Kanapin A."/>
            <person name="Katoh M."/>
            <person name="Kawasawa Y."/>
            <person name="Kelso J."/>
            <person name="Kitamura H."/>
            <person name="Kitano H."/>
            <person name="Kollias G."/>
            <person name="Krishnan S.P."/>
            <person name="Kruger A."/>
            <person name="Kummerfeld S.K."/>
            <person name="Kurochkin I.V."/>
            <person name="Lareau L.F."/>
            <person name="Lazarevic D."/>
            <person name="Lipovich L."/>
            <person name="Liu J."/>
            <person name="Liuni S."/>
            <person name="McWilliam S."/>
            <person name="Madan Babu M."/>
            <person name="Madera M."/>
            <person name="Marchionni L."/>
            <person name="Matsuda H."/>
            <person name="Matsuzawa S."/>
            <person name="Miki H."/>
            <person name="Mignone F."/>
            <person name="Miyake S."/>
            <person name="Morris K."/>
            <person name="Mottagui-Tabar S."/>
            <person name="Mulder N."/>
            <person name="Nakano N."/>
            <person name="Nakauchi H."/>
            <person name="Ng P."/>
            <person name="Nilsson R."/>
            <person name="Nishiguchi S."/>
            <person name="Nishikawa S."/>
            <person name="Nori F."/>
            <person name="Ohara O."/>
            <person name="Okazaki Y."/>
            <person name="Orlando V."/>
            <person name="Pang K.C."/>
            <person name="Pavan W.J."/>
            <person name="Pavesi G."/>
            <person name="Pesole G."/>
            <person name="Petrovsky N."/>
            <person name="Piazza S."/>
            <person name="Reed J."/>
            <person name="Reid J.F."/>
            <person name="Ring B.Z."/>
            <person name="Ringwald M."/>
            <person name="Rost B."/>
            <person name="Ruan Y."/>
            <person name="Salzberg S.L."/>
            <person name="Sandelin A."/>
            <person name="Schneider C."/>
            <person name="Schoenbach C."/>
            <person name="Sekiguchi K."/>
            <person name="Semple C.A."/>
            <person name="Seno S."/>
            <person name="Sessa L."/>
            <person name="Sheng Y."/>
            <person name="Shibata Y."/>
            <person name="Shimada H."/>
            <person name="Shimada K."/>
            <person name="Silva D."/>
            <person name="Sinclair B."/>
            <person name="Sperling S."/>
            <person name="Stupka E."/>
            <person name="Sugiura K."/>
            <person name="Sultana R."/>
            <person name="Takenaka Y."/>
            <person name="Taki K."/>
            <person name="Tammoja K."/>
            <person name="Tan S.L."/>
            <person name="Tang S."/>
            <person name="Taylor M.S."/>
            <person name="Tegner J."/>
            <person name="Teichmann S.A."/>
            <person name="Ueda H.R."/>
            <person name="van Nimwegen E."/>
            <person name="Verardo R."/>
            <person name="Wei C.L."/>
            <person name="Yagi K."/>
            <person name="Yamanishi H."/>
            <person name="Zabarovsky E."/>
            <person name="Zhu S."/>
            <person name="Zimmer A."/>
            <person name="Hide W."/>
            <person name="Bult C."/>
            <person name="Grimmond S.M."/>
            <person name="Teasdale R.D."/>
            <person name="Liu E.T."/>
            <person name="Brusic V."/>
            <person name="Quackenbush J."/>
            <person name="Wahlestedt C."/>
            <person name="Mattick J.S."/>
            <person name="Hume D.A."/>
            <person name="Kai C."/>
            <person name="Sasaki D."/>
            <person name="Tomaru Y."/>
            <person name="Fukuda S."/>
            <person name="Kanamori-Katayama M."/>
            <person name="Suzuki M."/>
            <person name="Aoki J."/>
            <person name="Arakawa T."/>
            <person name="Iida J."/>
            <person name="Imamura K."/>
            <person name="Itoh M."/>
            <person name="Kato T."/>
            <person name="Kawaji H."/>
            <person name="Kawagashira N."/>
            <person name="Kawashima T."/>
            <person name="Kojima M."/>
            <person name="Kondo S."/>
            <person name="Konno H."/>
            <person name="Nakano K."/>
            <person name="Ninomiya N."/>
            <person name="Nishio T."/>
            <person name="Okada M."/>
            <person name="Plessy C."/>
            <person name="Shibata K."/>
            <person name="Shiraki T."/>
            <person name="Suzuki S."/>
            <person name="Tagami M."/>
            <person name="Waki K."/>
            <person name="Watahiki A."/>
            <person name="Okamura-Oho Y."/>
            <person name="Suzuki H."/>
            <person name="Kawai J."/>
            <person name="Hayashizaki Y."/>
        </authorList>
    </citation>
    <scope>NUCLEOTIDE SEQUENCE [LARGE SCALE MRNA]</scope>
    <source>
        <strain>C57BL/6J</strain>
        <tissue>Embryo</tissue>
    </source>
</reference>
<reference key="2">
    <citation type="journal article" date="2004" name="Genome Res.">
        <title>The status, quality, and expansion of the NIH full-length cDNA project: the Mammalian Gene Collection (MGC).</title>
        <authorList>
            <consortium name="The MGC Project Team"/>
        </authorList>
    </citation>
    <scope>NUCLEOTIDE SEQUENCE [LARGE SCALE MRNA]</scope>
    <source>
        <strain>FVB/N</strain>
        <tissue>Brain</tissue>
        <tissue>Liver</tissue>
    </source>
</reference>
<reference key="3">
    <citation type="journal article" date="2017" name="Cell Rep.">
        <title>WBSCR16 Is a Guanine Nucleotide Exchange Factor Important for Mitochondrial Fusion.</title>
        <authorList>
            <person name="Huang G."/>
            <person name="Massoudi D."/>
            <person name="Muir A.M."/>
            <person name="Joshi D.C."/>
            <person name="Zhang C.L."/>
            <person name="Chiu S.Y."/>
            <person name="Greenspan D.S."/>
        </authorList>
    </citation>
    <scope>FUNCTION</scope>
    <scope>SUBCELLULAR LOCATION</scope>
    <scope>SUBUNIT</scope>
    <scope>TISSUE SPECIFICITY</scope>
</reference>